<evidence type="ECO:0000255" key="1">
    <source>
        <dbReference type="HAMAP-Rule" id="MF_00048"/>
    </source>
</evidence>
<reference key="1">
    <citation type="journal article" date="2008" name="Proc. Natl. Acad. Sci. U.S.A.">
        <title>Niche adaptation and genome expansion in the chlorophyll d-producing cyanobacterium Acaryochloris marina.</title>
        <authorList>
            <person name="Swingley W.D."/>
            <person name="Chen M."/>
            <person name="Cheung P.C."/>
            <person name="Conrad A.L."/>
            <person name="Dejesa L.C."/>
            <person name="Hao J."/>
            <person name="Honchak B.M."/>
            <person name="Karbach L.E."/>
            <person name="Kurdoglu A."/>
            <person name="Lahiri S."/>
            <person name="Mastrian S.D."/>
            <person name="Miyashita H."/>
            <person name="Page L."/>
            <person name="Ramakrishna P."/>
            <person name="Satoh S."/>
            <person name="Sattley W.M."/>
            <person name="Shimada Y."/>
            <person name="Taylor H.L."/>
            <person name="Tomo T."/>
            <person name="Tsuchiya T."/>
            <person name="Wang Z.T."/>
            <person name="Raymond J."/>
            <person name="Mimuro M."/>
            <person name="Blankenship R.E."/>
            <person name="Touchman J.W."/>
        </authorList>
    </citation>
    <scope>NUCLEOTIDE SEQUENCE [LARGE SCALE GENOMIC DNA]</scope>
    <source>
        <strain>MBIC 11017</strain>
    </source>
</reference>
<proteinExistence type="inferred from homology"/>
<organism>
    <name type="scientific">Acaryochloris marina (strain MBIC 11017)</name>
    <dbReference type="NCBI Taxonomy" id="329726"/>
    <lineage>
        <taxon>Bacteria</taxon>
        <taxon>Bacillati</taxon>
        <taxon>Cyanobacteriota</taxon>
        <taxon>Cyanophyceae</taxon>
        <taxon>Acaryochloridales</taxon>
        <taxon>Acaryochloridaceae</taxon>
        <taxon>Acaryochloris</taxon>
    </lineage>
</organism>
<protein>
    <recommendedName>
        <fullName evidence="1">UPF0102 protein AM1_3954</fullName>
    </recommendedName>
</protein>
<name>Y3954_ACAM1</name>
<dbReference type="EMBL" id="CP000828">
    <property type="protein sequence ID" value="ABW28939.1"/>
    <property type="molecule type" value="Genomic_DNA"/>
</dbReference>
<dbReference type="RefSeq" id="WP_012164295.1">
    <property type="nucleotide sequence ID" value="NC_009925.1"/>
</dbReference>
<dbReference type="SMR" id="B0C8B9"/>
<dbReference type="STRING" id="329726.AM1_3954"/>
<dbReference type="KEGG" id="amr:AM1_3954"/>
<dbReference type="eggNOG" id="COG0792">
    <property type="taxonomic scope" value="Bacteria"/>
</dbReference>
<dbReference type="HOGENOM" id="CLU_115353_3_0_3"/>
<dbReference type="OrthoDB" id="9802516at2"/>
<dbReference type="Proteomes" id="UP000000268">
    <property type="component" value="Chromosome"/>
</dbReference>
<dbReference type="GO" id="GO:0003676">
    <property type="term" value="F:nucleic acid binding"/>
    <property type="evidence" value="ECO:0007669"/>
    <property type="project" value="InterPro"/>
</dbReference>
<dbReference type="CDD" id="cd20736">
    <property type="entry name" value="PoNe_Nuclease"/>
    <property type="match status" value="1"/>
</dbReference>
<dbReference type="Gene3D" id="3.40.1350.10">
    <property type="match status" value="1"/>
</dbReference>
<dbReference type="HAMAP" id="MF_00048">
    <property type="entry name" value="UPF0102"/>
    <property type="match status" value="1"/>
</dbReference>
<dbReference type="InterPro" id="IPR011335">
    <property type="entry name" value="Restrct_endonuc-II-like"/>
</dbReference>
<dbReference type="InterPro" id="IPR011856">
    <property type="entry name" value="tRNA_endonuc-like_dom_sf"/>
</dbReference>
<dbReference type="InterPro" id="IPR003509">
    <property type="entry name" value="UPF0102_YraN-like"/>
</dbReference>
<dbReference type="NCBIfam" id="TIGR00252">
    <property type="entry name" value="YraN family protein"/>
    <property type="match status" value="1"/>
</dbReference>
<dbReference type="PANTHER" id="PTHR34039">
    <property type="entry name" value="UPF0102 PROTEIN YRAN"/>
    <property type="match status" value="1"/>
</dbReference>
<dbReference type="PANTHER" id="PTHR34039:SF1">
    <property type="entry name" value="UPF0102 PROTEIN YRAN"/>
    <property type="match status" value="1"/>
</dbReference>
<dbReference type="Pfam" id="PF02021">
    <property type="entry name" value="UPF0102"/>
    <property type="match status" value="1"/>
</dbReference>
<dbReference type="SUPFAM" id="SSF52980">
    <property type="entry name" value="Restriction endonuclease-like"/>
    <property type="match status" value="1"/>
</dbReference>
<sequence>MPSPAAPRPNRQSRNLQVGEWGEQLVCQWLTQQQWHILDRRWHCRWGEIDIIARSNPPLPGQDSNTRLAFVEVKTRRAQNWDADGLLAITPQKQQKLWKTAQLYLKKHPELAELFCQFDVALVQCNLNSNSPSKTVHVQDDLQVTTVEINQPIHVRGYQFMLLDYIESAFTL</sequence>
<gene>
    <name type="ordered locus">AM1_3954</name>
</gene>
<accession>B0C8B9</accession>
<feature type="chain" id="PRO_0000336107" description="UPF0102 protein AM1_3954">
    <location>
        <begin position="1"/>
        <end position="172"/>
    </location>
</feature>
<keyword id="KW-1185">Reference proteome</keyword>
<comment type="similarity">
    <text evidence="1">Belongs to the UPF0102 family.</text>
</comment>